<sequence>MTTFETPRETVFIESVDSIPQSKKTHVFAICVTVDNKPIVAARRSSFVFQEITMNMNPPIVVTISKHLTNYMYNNEIKEIKRKLQKGSAPIYKTSFEELILLGGKLNKSETIDDCIRREIKEETDSKLTIKSIGTTCVKITITDKLFNRKYVNYCKLCYIDELMEEVISFVIYNVEIRKLKSLLDCDNNDKFNYLRFIYNTLLYSK</sequence>
<comment type="function">
    <text evidence="1">Decapping enzyme required for the removal of the 5'-end m7GpppN cap tethered to viral and host mRNAs to allow their decay in cells. May therefore accelerate viral and cellular mRNA turnover to eliminate competing host mRNAs and allow stage-specific synthesis of viral proteins. Acceleration of the turnover of cellular transcripts may even promote the shutoff of host protein synthesis. Does not cleave unmethylated RNAs or RNAs shorter than 24 nucleotides (By similarity).</text>
</comment>
<comment type="cofactor">
    <cofactor evidence="1">
        <name>Mg(2+)</name>
        <dbReference type="ChEBI" id="CHEBI:18420"/>
    </cofactor>
    <cofactor evidence="1">
        <name>Mn(2+)</name>
        <dbReference type="ChEBI" id="CHEBI:29035"/>
    </cofactor>
</comment>
<comment type="induction">
    <text>Expressed in the early phase of the viral replicative cycle.</text>
</comment>
<comment type="similarity">
    <text evidence="3">Belongs to the Nudix hydrolase family.</text>
</comment>
<keyword id="KW-0378">Hydrolase</keyword>
<keyword id="KW-0460">Magnesium</keyword>
<keyword id="KW-0464">Manganese</keyword>
<keyword id="KW-0479">Metal-binding</keyword>
<keyword id="KW-1185">Reference proteome</keyword>
<evidence type="ECO:0000250" key="1"/>
<evidence type="ECO:0000255" key="2">
    <source>
        <dbReference type="PROSITE-ProRule" id="PRU00794"/>
    </source>
</evidence>
<evidence type="ECO:0000305" key="3"/>
<name>D9_RFVKA</name>
<accession>P32098</accession>
<accession>Q9Q8Z3</accession>
<reference key="1">
    <citation type="journal article" date="1991" name="Virology">
        <title>Sequence and analysis of a portion of the genomes of Shope fibroma virus and malignant rabbit fibroma virus that is important for viral replication in lymphocytes.</title>
        <authorList>
            <person name="Strayer D.S."/>
            <person name="Jerng H.H."/>
            <person name="O'Connor K."/>
        </authorList>
    </citation>
    <scope>NUCLEOTIDE SEQUENCE [GENOMIC DNA]</scope>
</reference>
<reference key="2">
    <citation type="journal article" date="1992" name="Virus Res.">
        <title>Sequence and analysis of the BamHI 'D' fragment of Shope fibroma virus: comparison with similar regions of related poxviruses.</title>
        <authorList>
            <person name="Strayer D.S."/>
            <person name="Jerng H.H."/>
        </authorList>
    </citation>
    <scope>NUCLEOTIDE SEQUENCE [GENOMIC DNA]</scope>
</reference>
<reference key="3">
    <citation type="journal article" date="1999" name="Virology">
        <title>The complete genome sequence of shope (Rabbit) fibroma virus.</title>
        <authorList>
            <person name="Willer D.O."/>
            <person name="McFadden G."/>
            <person name="Evans D.H."/>
        </authorList>
    </citation>
    <scope>NUCLEOTIDE SEQUENCE [LARGE SCALE GENOMIC DNA]</scope>
</reference>
<organismHost>
    <name type="scientific">Oryctolagus cuniculus</name>
    <name type="common">Rabbit</name>
    <dbReference type="NCBI Taxonomy" id="9986"/>
</organismHost>
<gene>
    <name type="ORF">D9R</name>
    <name type="ORF">s084R</name>
</gene>
<feature type="chain" id="PRO_0000057091" description="mRNA-decapping protein D9">
    <location>
        <begin position="1"/>
        <end position="206"/>
    </location>
</feature>
<feature type="domain" description="Nudix hydrolase" evidence="2">
    <location>
        <begin position="23"/>
        <end position="206"/>
    </location>
</feature>
<feature type="short sequence motif" description="Nudix box">
    <location>
        <begin position="104"/>
        <end position="125"/>
    </location>
</feature>
<feature type="active site" description="Nucleophile" evidence="1">
    <location>
        <position position="119"/>
    </location>
</feature>
<feature type="binding site" evidence="1">
    <location>
        <position position="110"/>
    </location>
    <ligand>
        <name>Mg(2+)</name>
        <dbReference type="ChEBI" id="CHEBI:18420"/>
    </ligand>
</feature>
<feature type="binding site" evidence="1">
    <location>
        <position position="123"/>
    </location>
    <ligand>
        <name>Mg(2+)</name>
        <dbReference type="ChEBI" id="CHEBI:18420"/>
    </ligand>
</feature>
<feature type="binding site" evidence="1">
    <location>
        <position position="144"/>
    </location>
    <ligand>
        <name>Mg(2+)</name>
        <dbReference type="ChEBI" id="CHEBI:18420"/>
    </ligand>
</feature>
<dbReference type="EC" id="3.1.3.-"/>
<dbReference type="EMBL" id="M74532">
    <property type="status" value="NOT_ANNOTATED_CDS"/>
    <property type="molecule type" value="Genomic_DNA"/>
</dbReference>
<dbReference type="EMBL" id="AF170722">
    <property type="protein sequence ID" value="AAF17968.1"/>
    <property type="molecule type" value="Genomic_DNA"/>
</dbReference>
<dbReference type="RefSeq" id="NP_051973.1">
    <property type="nucleotide sequence ID" value="NC_001266.1"/>
</dbReference>
<dbReference type="SMR" id="P32098"/>
<dbReference type="KEGG" id="vg:1486929"/>
<dbReference type="Proteomes" id="UP000000868">
    <property type="component" value="Segment"/>
</dbReference>
<dbReference type="GO" id="GO:0016787">
    <property type="term" value="F:hydrolase activity"/>
    <property type="evidence" value="ECO:0007669"/>
    <property type="project" value="UniProtKB-KW"/>
</dbReference>
<dbReference type="GO" id="GO:0046872">
    <property type="term" value="F:metal ion binding"/>
    <property type="evidence" value="ECO:0007669"/>
    <property type="project" value="UniProtKB-KW"/>
</dbReference>
<dbReference type="Gene3D" id="3.90.79.10">
    <property type="entry name" value="Nucleoside Triphosphate Pyrophosphohydrolase"/>
    <property type="match status" value="1"/>
</dbReference>
<dbReference type="InterPro" id="IPR015797">
    <property type="entry name" value="NUDIX_hydrolase-like_dom_sf"/>
</dbReference>
<dbReference type="InterPro" id="IPR000086">
    <property type="entry name" value="NUDIX_hydrolase_dom"/>
</dbReference>
<dbReference type="InterPro" id="IPR003300">
    <property type="entry name" value="Viral_VD9"/>
</dbReference>
<dbReference type="Pfam" id="PF00293">
    <property type="entry name" value="NUDIX"/>
    <property type="match status" value="1"/>
</dbReference>
<dbReference type="PRINTS" id="PR01363">
    <property type="entry name" value="VD09PROTEIN"/>
</dbReference>
<dbReference type="SUPFAM" id="SSF55811">
    <property type="entry name" value="Nudix"/>
    <property type="match status" value="1"/>
</dbReference>
<dbReference type="PROSITE" id="PS51462">
    <property type="entry name" value="NUDIX"/>
    <property type="match status" value="1"/>
</dbReference>
<dbReference type="PROSITE" id="PS00893">
    <property type="entry name" value="NUDIX_BOX"/>
    <property type="match status" value="1"/>
</dbReference>
<organism>
    <name type="scientific">Rabbit fibroma virus (strain Kasza)</name>
    <name type="common">RFV</name>
    <name type="synonym">Shope fibroma virus (strain Kasza)</name>
    <dbReference type="NCBI Taxonomy" id="10272"/>
    <lineage>
        <taxon>Viruses</taxon>
        <taxon>Varidnaviria</taxon>
        <taxon>Bamfordvirae</taxon>
        <taxon>Nucleocytoviricota</taxon>
        <taxon>Pokkesviricetes</taxon>
        <taxon>Chitovirales</taxon>
        <taxon>Poxviridae</taxon>
        <taxon>Chordopoxvirinae</taxon>
        <taxon>Leporipoxvirus</taxon>
        <taxon>Rabbit fibroma virus</taxon>
    </lineage>
</organism>
<proteinExistence type="evidence at transcript level"/>
<protein>
    <recommendedName>
        <fullName>mRNA-decapping protein D9</fullName>
        <ecNumber>3.1.3.-</ecNumber>
    </recommendedName>
</protein>